<name>NOTUM_HUMAN</name>
<accession>Q6P988</accession>
<accession>Q8N410</accession>
<accession>Q8NI82</accession>
<dbReference type="EC" id="3.1.1.98" evidence="5"/>
<dbReference type="EMBL" id="AC145207">
    <property type="status" value="NOT_ANNOTATED_CDS"/>
    <property type="molecule type" value="Genomic_DNA"/>
</dbReference>
<dbReference type="EMBL" id="BC036872">
    <property type="protein sequence ID" value="AAH36872.2"/>
    <property type="status" value="ALT_INIT"/>
    <property type="molecule type" value="mRNA"/>
</dbReference>
<dbReference type="EMBL" id="BC060882">
    <property type="protein sequence ID" value="AAH60882.1"/>
    <property type="status" value="ALT_INIT"/>
    <property type="molecule type" value="mRNA"/>
</dbReference>
<dbReference type="EMBL" id="AB062438">
    <property type="protein sequence ID" value="BAB93501.1"/>
    <property type="status" value="ALT_INIT"/>
    <property type="molecule type" value="mRNA"/>
</dbReference>
<dbReference type="CCDS" id="CCDS32771.2"/>
<dbReference type="RefSeq" id="NP_848588.3">
    <property type="nucleotide sequence ID" value="NM_178493.5"/>
</dbReference>
<dbReference type="PDB" id="4UYU">
    <property type="method" value="X-ray"/>
    <property type="resolution" value="2.30 A"/>
    <property type="chains" value="A/B=81-451"/>
</dbReference>
<dbReference type="PDB" id="4UYW">
    <property type="method" value="X-ray"/>
    <property type="resolution" value="1.70 A"/>
    <property type="chains" value="A/B=81-451"/>
</dbReference>
<dbReference type="PDB" id="4UYZ">
    <property type="method" value="X-ray"/>
    <property type="resolution" value="2.80 A"/>
    <property type="chains" value="A/B/C/D=38-496"/>
</dbReference>
<dbReference type="PDB" id="4UZ1">
    <property type="method" value="X-ray"/>
    <property type="resolution" value="1.40 A"/>
    <property type="chains" value="A=81-451"/>
</dbReference>
<dbReference type="PDB" id="4UZ5">
    <property type="method" value="X-ray"/>
    <property type="resolution" value="2.10 A"/>
    <property type="chains" value="A=81-451"/>
</dbReference>
<dbReference type="PDB" id="4UZ6">
    <property type="method" value="X-ray"/>
    <property type="resolution" value="1.90 A"/>
    <property type="chains" value="A/B=81-451"/>
</dbReference>
<dbReference type="PDB" id="4UZ7">
    <property type="method" value="X-ray"/>
    <property type="resolution" value="2.20 A"/>
    <property type="chains" value="A/B=81-451"/>
</dbReference>
<dbReference type="PDB" id="4UZ9">
    <property type="method" value="X-ray"/>
    <property type="resolution" value="2.20 A"/>
    <property type="chains" value="A=81-451"/>
</dbReference>
<dbReference type="PDB" id="4UZA">
    <property type="method" value="X-ray"/>
    <property type="resolution" value="2.40 A"/>
    <property type="chains" value="A=81-451"/>
</dbReference>
<dbReference type="PDB" id="4UZL">
    <property type="method" value="X-ray"/>
    <property type="resolution" value="2.10 A"/>
    <property type="chains" value="A/B=81-451"/>
</dbReference>
<dbReference type="PDB" id="4UZQ">
    <property type="method" value="X-ray"/>
    <property type="resolution" value="1.50 A"/>
    <property type="chains" value="A=81-451"/>
</dbReference>
<dbReference type="PDB" id="4WBH">
    <property type="method" value="X-ray"/>
    <property type="resolution" value="2.20 A"/>
    <property type="chains" value="A/B=38-496"/>
</dbReference>
<dbReference type="PDB" id="6R8P">
    <property type="method" value="X-ray"/>
    <property type="resolution" value="1.45 A"/>
    <property type="chains" value="A=81-451"/>
</dbReference>
<dbReference type="PDB" id="6R8Q">
    <property type="method" value="X-ray"/>
    <property type="resolution" value="1.50 A"/>
    <property type="chains" value="A=81-451"/>
</dbReference>
<dbReference type="PDB" id="6R8R">
    <property type="method" value="X-ray"/>
    <property type="resolution" value="1.27 A"/>
    <property type="chains" value="A=81-451"/>
</dbReference>
<dbReference type="PDB" id="6T2H">
    <property type="method" value="X-ray"/>
    <property type="resolution" value="1.41 A"/>
    <property type="chains" value="A=81-451"/>
</dbReference>
<dbReference type="PDB" id="6T2K">
    <property type="method" value="X-ray"/>
    <property type="resolution" value="1.38 A"/>
    <property type="chains" value="A=81-451"/>
</dbReference>
<dbReference type="PDB" id="6TR5">
    <property type="method" value="X-ray"/>
    <property type="resolution" value="1.51 A"/>
    <property type="chains" value="A=81-451"/>
</dbReference>
<dbReference type="PDB" id="6TR6">
    <property type="method" value="X-ray"/>
    <property type="resolution" value="1.35 A"/>
    <property type="chains" value="A=81-451"/>
</dbReference>
<dbReference type="PDB" id="6TR7">
    <property type="method" value="X-ray"/>
    <property type="resolution" value="1.47 A"/>
    <property type="chains" value="A=81-451"/>
</dbReference>
<dbReference type="PDB" id="6TUZ">
    <property type="method" value="X-ray"/>
    <property type="resolution" value="1.24 A"/>
    <property type="chains" value="A=81-451"/>
</dbReference>
<dbReference type="PDB" id="6TV4">
    <property type="method" value="X-ray"/>
    <property type="resolution" value="1.53 A"/>
    <property type="chains" value="A=81-451"/>
</dbReference>
<dbReference type="PDB" id="6YSK">
    <property type="method" value="X-ray"/>
    <property type="resolution" value="1.21 A"/>
    <property type="chains" value="A=81-451"/>
</dbReference>
<dbReference type="PDB" id="6YUW">
    <property type="method" value="X-ray"/>
    <property type="resolution" value="1.94 A"/>
    <property type="chains" value="A=81-451"/>
</dbReference>
<dbReference type="PDB" id="6YUY">
    <property type="method" value="X-ray"/>
    <property type="resolution" value="2.00 A"/>
    <property type="chains" value="A=81-451"/>
</dbReference>
<dbReference type="PDB" id="6YV0">
    <property type="method" value="X-ray"/>
    <property type="resolution" value="2.00 A"/>
    <property type="chains" value="A=81-451"/>
</dbReference>
<dbReference type="PDB" id="6YV2">
    <property type="method" value="X-ray"/>
    <property type="resolution" value="2.10 A"/>
    <property type="chains" value="A=81-451"/>
</dbReference>
<dbReference type="PDB" id="6YV4">
    <property type="method" value="X-ray"/>
    <property type="resolution" value="2.00 A"/>
    <property type="chains" value="A=81-451"/>
</dbReference>
<dbReference type="PDB" id="6YXI">
    <property type="method" value="X-ray"/>
    <property type="resolution" value="1.34 A"/>
    <property type="chains" value="A=81-451"/>
</dbReference>
<dbReference type="PDB" id="6ZUV">
    <property type="method" value="X-ray"/>
    <property type="resolution" value="1.54 A"/>
    <property type="chains" value="A=81-451"/>
</dbReference>
<dbReference type="PDB" id="6ZVL">
    <property type="method" value="X-ray"/>
    <property type="resolution" value="1.30 A"/>
    <property type="chains" value="A=81-451"/>
</dbReference>
<dbReference type="PDB" id="6ZYF">
    <property type="method" value="X-ray"/>
    <property type="resolution" value="2.19 A"/>
    <property type="chains" value="A/B=81-451"/>
</dbReference>
<dbReference type="PDB" id="7ARG">
    <property type="method" value="X-ray"/>
    <property type="resolution" value="1.24 A"/>
    <property type="chains" value="A=81-451"/>
</dbReference>
<dbReference type="PDB" id="7B2V">
    <property type="method" value="X-ray"/>
    <property type="resolution" value="1.24 A"/>
    <property type="chains" value="A=81-451"/>
</dbReference>
<dbReference type="PDB" id="7B2Y">
    <property type="method" value="X-ray"/>
    <property type="resolution" value="1.23 A"/>
    <property type="chains" value="A=81-451"/>
</dbReference>
<dbReference type="PDB" id="7B2Z">
    <property type="method" value="X-ray"/>
    <property type="resolution" value="1.24 A"/>
    <property type="chains" value="A=81-451"/>
</dbReference>
<dbReference type="PDB" id="7B37">
    <property type="method" value="X-ray"/>
    <property type="resolution" value="1.34 A"/>
    <property type="chains" value="A=81-451"/>
</dbReference>
<dbReference type="PDB" id="7B3F">
    <property type="method" value="X-ray"/>
    <property type="resolution" value="1.39 A"/>
    <property type="chains" value="A=81-451"/>
</dbReference>
<dbReference type="PDB" id="7B3G">
    <property type="method" value="X-ray"/>
    <property type="resolution" value="1.28 A"/>
    <property type="chains" value="A=81-451"/>
</dbReference>
<dbReference type="PDB" id="7B3H">
    <property type="method" value="X-ray"/>
    <property type="resolution" value="1.28 A"/>
    <property type="chains" value="A=81-451"/>
</dbReference>
<dbReference type="PDB" id="7B3I">
    <property type="method" value="X-ray"/>
    <property type="resolution" value="1.34 A"/>
    <property type="chains" value="A=81-451"/>
</dbReference>
<dbReference type="PDB" id="7B3P">
    <property type="method" value="X-ray"/>
    <property type="resolution" value="1.28 A"/>
    <property type="chains" value="A=81-451"/>
</dbReference>
<dbReference type="PDB" id="7B3X">
    <property type="method" value="X-ray"/>
    <property type="resolution" value="1.34 A"/>
    <property type="chains" value="A=81-451"/>
</dbReference>
<dbReference type="PDB" id="7B45">
    <property type="method" value="X-ray"/>
    <property type="resolution" value="1.38 A"/>
    <property type="chains" value="A=81-451"/>
</dbReference>
<dbReference type="PDB" id="7B4X">
    <property type="method" value="X-ray"/>
    <property type="resolution" value="1.24 A"/>
    <property type="chains" value="A=81-451"/>
</dbReference>
<dbReference type="PDB" id="7B50">
    <property type="method" value="X-ray"/>
    <property type="resolution" value="1.33 A"/>
    <property type="chains" value="A=81-451"/>
</dbReference>
<dbReference type="PDB" id="7B7W">
    <property type="method" value="X-ray"/>
    <property type="resolution" value="1.60 A"/>
    <property type="chains" value="A=81-451"/>
</dbReference>
<dbReference type="PDB" id="7B7X">
    <property type="method" value="X-ray"/>
    <property type="resolution" value="2.41 A"/>
    <property type="chains" value="A=81-451"/>
</dbReference>
<dbReference type="PDB" id="7B7Y">
    <property type="method" value="X-ray"/>
    <property type="resolution" value="1.48 A"/>
    <property type="chains" value="A=81-451"/>
</dbReference>
<dbReference type="PDB" id="7B84">
    <property type="method" value="X-ray"/>
    <property type="resolution" value="1.36 A"/>
    <property type="chains" value="A=81-451"/>
</dbReference>
<dbReference type="PDB" id="7B86">
    <property type="method" value="X-ray"/>
    <property type="resolution" value="1.40 A"/>
    <property type="chains" value="A=81-451"/>
</dbReference>
<dbReference type="PDB" id="7B87">
    <property type="method" value="X-ray"/>
    <property type="resolution" value="1.58 A"/>
    <property type="chains" value="A=81-451"/>
</dbReference>
<dbReference type="PDB" id="7B89">
    <property type="method" value="X-ray"/>
    <property type="resolution" value="1.84 A"/>
    <property type="chains" value="A=81-451"/>
</dbReference>
<dbReference type="PDB" id="7B8A">
    <property type="method" value="X-ray"/>
    <property type="resolution" value="1.23 A"/>
    <property type="chains" value="A=81-451"/>
</dbReference>
<dbReference type="PDB" id="7B8C">
    <property type="method" value="X-ray"/>
    <property type="resolution" value="1.43 A"/>
    <property type="chains" value="A=81-451"/>
</dbReference>
<dbReference type="PDB" id="7B8D">
    <property type="method" value="X-ray"/>
    <property type="resolution" value="1.62 A"/>
    <property type="chains" value="A=81-451"/>
</dbReference>
<dbReference type="PDB" id="7B8F">
    <property type="method" value="X-ray"/>
    <property type="resolution" value="1.62 A"/>
    <property type="chains" value="A=81-451"/>
</dbReference>
<dbReference type="PDB" id="7B8G">
    <property type="method" value="X-ray"/>
    <property type="resolution" value="1.58 A"/>
    <property type="chains" value="A=81-451"/>
</dbReference>
<dbReference type="PDB" id="7B8J">
    <property type="method" value="X-ray"/>
    <property type="resolution" value="1.75 A"/>
    <property type="chains" value="A=81-451"/>
</dbReference>
<dbReference type="PDB" id="7B8K">
    <property type="method" value="X-ray"/>
    <property type="resolution" value="1.60 A"/>
    <property type="chains" value="A=81-451"/>
</dbReference>
<dbReference type="PDB" id="7B8L">
    <property type="method" value="X-ray"/>
    <property type="resolution" value="1.45 A"/>
    <property type="chains" value="A=81-451"/>
</dbReference>
<dbReference type="PDB" id="7B8M">
    <property type="method" value="X-ray"/>
    <property type="resolution" value="1.48 A"/>
    <property type="chains" value="A=81-451"/>
</dbReference>
<dbReference type="PDB" id="7B8N">
    <property type="method" value="X-ray"/>
    <property type="resolution" value="1.56 A"/>
    <property type="chains" value="A=81-451"/>
</dbReference>
<dbReference type="PDB" id="7B8O">
    <property type="method" value="X-ray"/>
    <property type="resolution" value="1.50 A"/>
    <property type="chains" value="A=81-451"/>
</dbReference>
<dbReference type="PDB" id="7B8U">
    <property type="method" value="X-ray"/>
    <property type="resolution" value="1.54 A"/>
    <property type="chains" value="A=81-451"/>
</dbReference>
<dbReference type="PDB" id="7B8X">
    <property type="method" value="X-ray"/>
    <property type="resolution" value="1.51 A"/>
    <property type="chains" value="A=81-451"/>
</dbReference>
<dbReference type="PDB" id="7B8Y">
    <property type="method" value="X-ray"/>
    <property type="resolution" value="1.57 A"/>
    <property type="chains" value="A=81-451"/>
</dbReference>
<dbReference type="PDB" id="7B8Z">
    <property type="method" value="X-ray"/>
    <property type="resolution" value="1.73 A"/>
    <property type="chains" value="A=81-451"/>
</dbReference>
<dbReference type="PDB" id="7B98">
    <property type="method" value="X-ray"/>
    <property type="resolution" value="1.53 A"/>
    <property type="chains" value="A=81-451"/>
</dbReference>
<dbReference type="PDB" id="7B99">
    <property type="method" value="X-ray"/>
    <property type="resolution" value="1.81 A"/>
    <property type="chains" value="A=81-451"/>
</dbReference>
<dbReference type="PDB" id="7B9D">
    <property type="method" value="X-ray"/>
    <property type="resolution" value="1.93 A"/>
    <property type="chains" value="A=81-451"/>
</dbReference>
<dbReference type="PDB" id="7B9I">
    <property type="method" value="X-ray"/>
    <property type="resolution" value="1.34 A"/>
    <property type="chains" value="A=81-451"/>
</dbReference>
<dbReference type="PDB" id="7B9N">
    <property type="method" value="X-ray"/>
    <property type="resolution" value="1.38 A"/>
    <property type="chains" value="A=81-451"/>
</dbReference>
<dbReference type="PDB" id="7B9U">
    <property type="method" value="X-ray"/>
    <property type="resolution" value="1.50 A"/>
    <property type="chains" value="A=81-451"/>
</dbReference>
<dbReference type="PDB" id="7BA1">
    <property type="method" value="X-ray"/>
    <property type="resolution" value="1.93 A"/>
    <property type="chains" value="A=81-451"/>
</dbReference>
<dbReference type="PDB" id="7BAC">
    <property type="method" value="X-ray"/>
    <property type="resolution" value="1.54 A"/>
    <property type="chains" value="A=81-451"/>
</dbReference>
<dbReference type="PDB" id="7BAP">
    <property type="method" value="X-ray"/>
    <property type="resolution" value="1.53 A"/>
    <property type="chains" value="A=81-451"/>
</dbReference>
<dbReference type="PDB" id="7BC8">
    <property type="method" value="X-ray"/>
    <property type="resolution" value="1.74 A"/>
    <property type="chains" value="A=81-451"/>
</dbReference>
<dbReference type="PDB" id="7BC9">
    <property type="method" value="X-ray"/>
    <property type="resolution" value="1.73 A"/>
    <property type="chains" value="A=81-451"/>
</dbReference>
<dbReference type="PDB" id="7BCC">
    <property type="method" value="X-ray"/>
    <property type="resolution" value="1.58 A"/>
    <property type="chains" value="A=81-451"/>
</dbReference>
<dbReference type="PDB" id="7BCD">
    <property type="method" value="X-ray"/>
    <property type="resolution" value="1.51 A"/>
    <property type="chains" value="A=81-451"/>
</dbReference>
<dbReference type="PDB" id="7BCF">
    <property type="method" value="X-ray"/>
    <property type="resolution" value="1.86 A"/>
    <property type="chains" value="A=81-451"/>
</dbReference>
<dbReference type="PDB" id="7BCH">
    <property type="method" value="X-ray"/>
    <property type="resolution" value="1.70 A"/>
    <property type="chains" value="A=81-451"/>
</dbReference>
<dbReference type="PDB" id="7BCI">
    <property type="method" value="X-ray"/>
    <property type="resolution" value="1.94 A"/>
    <property type="chains" value="A=81-451"/>
</dbReference>
<dbReference type="PDB" id="7BCK">
    <property type="method" value="X-ray"/>
    <property type="resolution" value="1.70 A"/>
    <property type="chains" value="A=81-451"/>
</dbReference>
<dbReference type="PDB" id="7BCL">
    <property type="method" value="X-ray"/>
    <property type="resolution" value="1.84 A"/>
    <property type="chains" value="A=81-451"/>
</dbReference>
<dbReference type="PDB" id="7BD2">
    <property type="method" value="X-ray"/>
    <property type="resolution" value="1.52 A"/>
    <property type="chains" value="A=81-451"/>
</dbReference>
<dbReference type="PDB" id="7BD3">
    <property type="method" value="X-ray"/>
    <property type="resolution" value="1.91 A"/>
    <property type="chains" value="A=81-451"/>
</dbReference>
<dbReference type="PDB" id="7BD4">
    <property type="method" value="X-ray"/>
    <property type="resolution" value="1.80 A"/>
    <property type="chains" value="A=81-451"/>
</dbReference>
<dbReference type="PDB" id="7BD5">
    <property type="method" value="X-ray"/>
    <property type="resolution" value="1.69 A"/>
    <property type="chains" value="A=81-451"/>
</dbReference>
<dbReference type="PDB" id="7BD6">
    <property type="method" value="X-ray"/>
    <property type="resolution" value="1.70 A"/>
    <property type="chains" value="A=81-451"/>
</dbReference>
<dbReference type="PDB" id="7BD8">
    <property type="method" value="X-ray"/>
    <property type="resolution" value="1.42 A"/>
    <property type="chains" value="A=81-451"/>
</dbReference>
<dbReference type="PDB" id="7BD9">
    <property type="method" value="X-ray"/>
    <property type="resolution" value="1.59 A"/>
    <property type="chains" value="A=81-451"/>
</dbReference>
<dbReference type="PDB" id="7BDA">
    <property type="method" value="X-ray"/>
    <property type="resolution" value="1.47 A"/>
    <property type="chains" value="A=81-451"/>
</dbReference>
<dbReference type="PDB" id="7BDB">
    <property type="method" value="X-ray"/>
    <property type="resolution" value="1.46 A"/>
    <property type="chains" value="A=81-451"/>
</dbReference>
<dbReference type="PDB" id="7BDC">
    <property type="method" value="X-ray"/>
    <property type="resolution" value="1.32 A"/>
    <property type="chains" value="A=81-451"/>
</dbReference>
<dbReference type="PDB" id="7BDD">
    <property type="method" value="X-ray"/>
    <property type="resolution" value="1.47 A"/>
    <property type="chains" value="A=81-451"/>
</dbReference>
<dbReference type="PDB" id="7BDF">
    <property type="method" value="X-ray"/>
    <property type="resolution" value="1.40 A"/>
    <property type="chains" value="A=81-451"/>
</dbReference>
<dbReference type="PDB" id="7BDG">
    <property type="method" value="X-ray"/>
    <property type="resolution" value="1.60 A"/>
    <property type="chains" value="A=81-451"/>
</dbReference>
<dbReference type="PDB" id="7BDH">
    <property type="method" value="X-ray"/>
    <property type="resolution" value="1.54 A"/>
    <property type="chains" value="A=81-451"/>
</dbReference>
<dbReference type="PDB" id="7BLI">
    <property type="method" value="X-ray"/>
    <property type="resolution" value="1.47 A"/>
    <property type="chains" value="A=81-451"/>
</dbReference>
<dbReference type="PDB" id="7BLS">
    <property type="method" value="X-ray"/>
    <property type="resolution" value="1.19 A"/>
    <property type="chains" value="A=81-451"/>
</dbReference>
<dbReference type="PDB" id="7BLT">
    <property type="method" value="X-ray"/>
    <property type="resolution" value="1.20 A"/>
    <property type="chains" value="A=81-451"/>
</dbReference>
<dbReference type="PDB" id="7BLU">
    <property type="method" value="X-ray"/>
    <property type="resolution" value="1.21 A"/>
    <property type="chains" value="A=81-451"/>
</dbReference>
<dbReference type="PDB" id="7BLW">
    <property type="method" value="X-ray"/>
    <property type="resolution" value="1.45 A"/>
    <property type="chains" value="A=81-451"/>
</dbReference>
<dbReference type="PDB" id="7BM1">
    <property type="method" value="X-ray"/>
    <property type="resolution" value="1.37 A"/>
    <property type="chains" value="A=81-451"/>
</dbReference>
<dbReference type="PDB" id="7BM3">
    <property type="method" value="X-ray"/>
    <property type="resolution" value="1.40 A"/>
    <property type="chains" value="A=81-451"/>
</dbReference>
<dbReference type="PDB" id="7BM7">
    <property type="method" value="X-ray"/>
    <property type="resolution" value="1.87 A"/>
    <property type="chains" value="A=81-451"/>
</dbReference>
<dbReference type="PDB" id="7BMB">
    <property type="method" value="X-ray"/>
    <property type="resolution" value="1.83 A"/>
    <property type="chains" value="A=81-451"/>
</dbReference>
<dbReference type="PDB" id="7BMD">
    <property type="method" value="X-ray"/>
    <property type="resolution" value="1.45 A"/>
    <property type="chains" value="A=81-451"/>
</dbReference>
<dbReference type="PDB" id="7BN5">
    <property type="method" value="X-ray"/>
    <property type="resolution" value="2.22 A"/>
    <property type="chains" value="A=81-451"/>
</dbReference>
<dbReference type="PDB" id="7BN8">
    <property type="method" value="X-ray"/>
    <property type="resolution" value="1.78 A"/>
    <property type="chains" value="A=81-451"/>
</dbReference>
<dbReference type="PDB" id="7BNB">
    <property type="method" value="X-ray"/>
    <property type="resolution" value="1.16 A"/>
    <property type="chains" value="A=81-451"/>
</dbReference>
<dbReference type="PDB" id="7BNC">
    <property type="method" value="X-ray"/>
    <property type="resolution" value="1.86 A"/>
    <property type="chains" value="A=81-451"/>
</dbReference>
<dbReference type="PDB" id="7BND">
    <property type="method" value="X-ray"/>
    <property type="resolution" value="2.10 A"/>
    <property type="chains" value="A=81-451"/>
</dbReference>
<dbReference type="PDB" id="7BNE">
    <property type="method" value="X-ray"/>
    <property type="resolution" value="1.70 A"/>
    <property type="chains" value="A=81-451"/>
</dbReference>
<dbReference type="PDB" id="7BNF">
    <property type="method" value="X-ray"/>
    <property type="resolution" value="1.45 A"/>
    <property type="chains" value="A=81-451"/>
</dbReference>
<dbReference type="PDB" id="7BNJ">
    <property type="method" value="X-ray"/>
    <property type="resolution" value="1.49 A"/>
    <property type="chains" value="A=81-451"/>
</dbReference>
<dbReference type="PDB" id="7BNL">
    <property type="method" value="X-ray"/>
    <property type="resolution" value="1.23 A"/>
    <property type="chains" value="A=81-451"/>
</dbReference>
<dbReference type="PDB" id="7BO1">
    <property type="method" value="X-ray"/>
    <property type="resolution" value="1.40 A"/>
    <property type="chains" value="A=81-451"/>
</dbReference>
<dbReference type="PDB" id="7BO2">
    <property type="method" value="X-ray"/>
    <property type="resolution" value="1.21 A"/>
    <property type="chains" value="A=81-451"/>
</dbReference>
<dbReference type="PDB" id="7BO5">
    <property type="method" value="X-ray"/>
    <property type="resolution" value="1.38 A"/>
    <property type="chains" value="A=81-451"/>
</dbReference>
<dbReference type="PDB" id="7PJR">
    <property type="method" value="X-ray"/>
    <property type="resolution" value="1.51 A"/>
    <property type="chains" value="A=81-451"/>
</dbReference>
<dbReference type="PDB" id="7PK3">
    <property type="method" value="X-ray"/>
    <property type="resolution" value="1.41 A"/>
    <property type="chains" value="A=81-451"/>
</dbReference>
<dbReference type="PDB" id="7PKV">
    <property type="method" value="X-ray"/>
    <property type="resolution" value="1.68 A"/>
    <property type="chains" value="A=81-451"/>
</dbReference>
<dbReference type="PDB" id="7QVZ">
    <property type="method" value="X-ray"/>
    <property type="resolution" value="1.47 A"/>
    <property type="chains" value="A=81-451"/>
</dbReference>
<dbReference type="PDB" id="8BSP">
    <property type="method" value="X-ray"/>
    <property type="resolution" value="1.55 A"/>
    <property type="chains" value="A=81-451"/>
</dbReference>
<dbReference type="PDB" id="8BSQ">
    <property type="method" value="X-ray"/>
    <property type="resolution" value="1.45 A"/>
    <property type="chains" value="A=81-451"/>
</dbReference>
<dbReference type="PDB" id="8BSR">
    <property type="method" value="X-ray"/>
    <property type="resolution" value="1.45 A"/>
    <property type="chains" value="A=81-451"/>
</dbReference>
<dbReference type="PDB" id="8BSZ">
    <property type="method" value="X-ray"/>
    <property type="resolution" value="1.70 A"/>
    <property type="chains" value="A=81-451"/>
</dbReference>
<dbReference type="PDB" id="8BT0">
    <property type="method" value="X-ray"/>
    <property type="resolution" value="1.60 A"/>
    <property type="chains" value="A=81-451"/>
</dbReference>
<dbReference type="PDB" id="8BT2">
    <property type="method" value="X-ray"/>
    <property type="resolution" value="1.70 A"/>
    <property type="chains" value="A=81-451"/>
</dbReference>
<dbReference type="PDB" id="8BT5">
    <property type="method" value="X-ray"/>
    <property type="resolution" value="1.40 A"/>
    <property type="chains" value="A=81-451"/>
</dbReference>
<dbReference type="PDB" id="8BT7">
    <property type="method" value="X-ray"/>
    <property type="resolution" value="1.40 A"/>
    <property type="chains" value="A=81-451"/>
</dbReference>
<dbReference type="PDB" id="8BT8">
    <property type="method" value="X-ray"/>
    <property type="resolution" value="1.28 A"/>
    <property type="chains" value="A=81-451"/>
</dbReference>
<dbReference type="PDB" id="8BTA">
    <property type="method" value="X-ray"/>
    <property type="resolution" value="1.34 A"/>
    <property type="chains" value="A=81-451"/>
</dbReference>
<dbReference type="PDB" id="8BTC">
    <property type="method" value="X-ray"/>
    <property type="resolution" value="1.54 A"/>
    <property type="chains" value="A=81-451"/>
</dbReference>
<dbReference type="PDB" id="8BTE">
    <property type="method" value="X-ray"/>
    <property type="resolution" value="1.62 A"/>
    <property type="chains" value="A=81-451"/>
</dbReference>
<dbReference type="PDB" id="8BTH">
    <property type="method" value="X-ray"/>
    <property type="resolution" value="1.30 A"/>
    <property type="chains" value="A=81-451"/>
</dbReference>
<dbReference type="PDB" id="8BTI">
    <property type="method" value="X-ray"/>
    <property type="resolution" value="1.31 A"/>
    <property type="chains" value="A=81-451"/>
</dbReference>
<dbReference type="PDBsum" id="4UYU"/>
<dbReference type="PDBsum" id="4UYW"/>
<dbReference type="PDBsum" id="4UYZ"/>
<dbReference type="PDBsum" id="4UZ1"/>
<dbReference type="PDBsum" id="4UZ5"/>
<dbReference type="PDBsum" id="4UZ6"/>
<dbReference type="PDBsum" id="4UZ7"/>
<dbReference type="PDBsum" id="4UZ9"/>
<dbReference type="PDBsum" id="4UZA"/>
<dbReference type="PDBsum" id="4UZL"/>
<dbReference type="PDBsum" id="4UZQ"/>
<dbReference type="PDBsum" id="4WBH"/>
<dbReference type="PDBsum" id="6R8P"/>
<dbReference type="PDBsum" id="6R8Q"/>
<dbReference type="PDBsum" id="6R8R"/>
<dbReference type="PDBsum" id="6T2H"/>
<dbReference type="PDBsum" id="6T2K"/>
<dbReference type="PDBsum" id="6TR5"/>
<dbReference type="PDBsum" id="6TR6"/>
<dbReference type="PDBsum" id="6TR7"/>
<dbReference type="PDBsum" id="6TUZ"/>
<dbReference type="PDBsum" id="6TV4"/>
<dbReference type="PDBsum" id="6YSK"/>
<dbReference type="PDBsum" id="6YUW"/>
<dbReference type="PDBsum" id="6YUY"/>
<dbReference type="PDBsum" id="6YV0"/>
<dbReference type="PDBsum" id="6YV2"/>
<dbReference type="PDBsum" id="6YV4"/>
<dbReference type="PDBsum" id="6YXI"/>
<dbReference type="PDBsum" id="6ZUV"/>
<dbReference type="PDBsum" id="6ZVL"/>
<dbReference type="PDBsum" id="6ZYF"/>
<dbReference type="PDBsum" id="7ARG"/>
<dbReference type="PDBsum" id="7B2V"/>
<dbReference type="PDBsum" id="7B2Y"/>
<dbReference type="PDBsum" id="7B2Z"/>
<dbReference type="PDBsum" id="7B37"/>
<dbReference type="PDBsum" id="7B3F"/>
<dbReference type="PDBsum" id="7B3G"/>
<dbReference type="PDBsum" id="7B3H"/>
<dbReference type="PDBsum" id="7B3I"/>
<dbReference type="PDBsum" id="7B3P"/>
<dbReference type="PDBsum" id="7B3X"/>
<dbReference type="PDBsum" id="7B45"/>
<dbReference type="PDBsum" id="7B4X"/>
<dbReference type="PDBsum" id="7B50"/>
<dbReference type="PDBsum" id="7B7W"/>
<dbReference type="PDBsum" id="7B7X"/>
<dbReference type="PDBsum" id="7B7Y"/>
<dbReference type="PDBsum" id="7B84"/>
<dbReference type="PDBsum" id="7B86"/>
<dbReference type="PDBsum" id="7B87"/>
<dbReference type="PDBsum" id="7B89"/>
<dbReference type="PDBsum" id="7B8A"/>
<dbReference type="PDBsum" id="7B8C"/>
<dbReference type="PDBsum" id="7B8D"/>
<dbReference type="PDBsum" id="7B8F"/>
<dbReference type="PDBsum" id="7B8G"/>
<dbReference type="PDBsum" id="7B8J"/>
<dbReference type="PDBsum" id="7B8K"/>
<dbReference type="PDBsum" id="7B8L"/>
<dbReference type="PDBsum" id="7B8M"/>
<dbReference type="PDBsum" id="7B8N"/>
<dbReference type="PDBsum" id="7B8O"/>
<dbReference type="PDBsum" id="7B8U"/>
<dbReference type="PDBsum" id="7B8X"/>
<dbReference type="PDBsum" id="7B8Y"/>
<dbReference type="PDBsum" id="7B8Z"/>
<dbReference type="PDBsum" id="7B98"/>
<dbReference type="PDBsum" id="7B99"/>
<dbReference type="PDBsum" id="7B9D"/>
<dbReference type="PDBsum" id="7B9I"/>
<dbReference type="PDBsum" id="7B9N"/>
<dbReference type="PDBsum" id="7B9U"/>
<dbReference type="PDBsum" id="7BA1"/>
<dbReference type="PDBsum" id="7BAC"/>
<dbReference type="PDBsum" id="7BAP"/>
<dbReference type="PDBsum" id="7BC8"/>
<dbReference type="PDBsum" id="7BC9"/>
<dbReference type="PDBsum" id="7BCC"/>
<dbReference type="PDBsum" id="7BCD"/>
<dbReference type="PDBsum" id="7BCF"/>
<dbReference type="PDBsum" id="7BCH"/>
<dbReference type="PDBsum" id="7BCI"/>
<dbReference type="PDBsum" id="7BCK"/>
<dbReference type="PDBsum" id="7BCL"/>
<dbReference type="PDBsum" id="7BD2"/>
<dbReference type="PDBsum" id="7BD3"/>
<dbReference type="PDBsum" id="7BD4"/>
<dbReference type="PDBsum" id="7BD5"/>
<dbReference type="PDBsum" id="7BD6"/>
<dbReference type="PDBsum" id="7BD8"/>
<dbReference type="PDBsum" id="7BD9"/>
<dbReference type="PDBsum" id="7BDA"/>
<dbReference type="PDBsum" id="7BDB"/>
<dbReference type="PDBsum" id="7BDC"/>
<dbReference type="PDBsum" id="7BDD"/>
<dbReference type="PDBsum" id="7BDF"/>
<dbReference type="PDBsum" id="7BDG"/>
<dbReference type="PDBsum" id="7BDH"/>
<dbReference type="PDBsum" id="7BLI"/>
<dbReference type="PDBsum" id="7BLS"/>
<dbReference type="PDBsum" id="7BLT"/>
<dbReference type="PDBsum" id="7BLU"/>
<dbReference type="PDBsum" id="7BLW"/>
<dbReference type="PDBsum" id="7BM1"/>
<dbReference type="PDBsum" id="7BM3"/>
<dbReference type="PDBsum" id="7BM7"/>
<dbReference type="PDBsum" id="7BMB"/>
<dbReference type="PDBsum" id="7BMD"/>
<dbReference type="PDBsum" id="7BN5"/>
<dbReference type="PDBsum" id="7BN8"/>
<dbReference type="PDBsum" id="7BNB"/>
<dbReference type="PDBsum" id="7BNC"/>
<dbReference type="PDBsum" id="7BND"/>
<dbReference type="PDBsum" id="7BNE"/>
<dbReference type="PDBsum" id="7BNF"/>
<dbReference type="PDBsum" id="7BNJ"/>
<dbReference type="PDBsum" id="7BNL"/>
<dbReference type="PDBsum" id="7BO1"/>
<dbReference type="PDBsum" id="7BO2"/>
<dbReference type="PDBsum" id="7BO5"/>
<dbReference type="PDBsum" id="7PJR"/>
<dbReference type="PDBsum" id="7PK3"/>
<dbReference type="PDBsum" id="7PKV"/>
<dbReference type="PDBsum" id="7QVZ"/>
<dbReference type="PDBsum" id="8BSP"/>
<dbReference type="PDBsum" id="8BSQ"/>
<dbReference type="PDBsum" id="8BSR"/>
<dbReference type="PDBsum" id="8BSZ"/>
<dbReference type="PDBsum" id="8BT0"/>
<dbReference type="PDBsum" id="8BT2"/>
<dbReference type="PDBsum" id="8BT5"/>
<dbReference type="PDBsum" id="8BT7"/>
<dbReference type="PDBsum" id="8BT8"/>
<dbReference type="PDBsum" id="8BTA"/>
<dbReference type="PDBsum" id="8BTC"/>
<dbReference type="PDBsum" id="8BTE"/>
<dbReference type="PDBsum" id="8BTH"/>
<dbReference type="PDBsum" id="8BTI"/>
<dbReference type="SMR" id="Q6P988"/>
<dbReference type="BioGRID" id="127036">
    <property type="interactions" value="5"/>
</dbReference>
<dbReference type="DIP" id="DIP-61508N"/>
<dbReference type="FunCoup" id="Q6P988">
    <property type="interactions" value="216"/>
</dbReference>
<dbReference type="IntAct" id="Q6P988">
    <property type="interactions" value="5"/>
</dbReference>
<dbReference type="STRING" id="9606.ENSP00000387310"/>
<dbReference type="BindingDB" id="Q6P988"/>
<dbReference type="ChEMBL" id="CHEMBL3714531"/>
<dbReference type="ESTHER" id="human-NOTUM">
    <property type="family name" value="Pectinacetylesterase-Notum"/>
</dbReference>
<dbReference type="GlyCosmos" id="Q6P988">
    <property type="glycosylation" value="1 site, No reported glycans"/>
</dbReference>
<dbReference type="GlyGen" id="Q6P988">
    <property type="glycosylation" value="1 site"/>
</dbReference>
<dbReference type="iPTMnet" id="Q6P988"/>
<dbReference type="PhosphoSitePlus" id="Q6P988"/>
<dbReference type="BioMuta" id="NOTUM"/>
<dbReference type="DMDM" id="182628300"/>
<dbReference type="MassIVE" id="Q6P988"/>
<dbReference type="PaxDb" id="9606-ENSP00000387310"/>
<dbReference type="PeptideAtlas" id="Q6P988"/>
<dbReference type="ProteomicsDB" id="67025"/>
<dbReference type="Antibodypedia" id="19856">
    <property type="antibodies" value="177 antibodies from 29 providers"/>
</dbReference>
<dbReference type="CPTC" id="Q6P988">
    <property type="antibodies" value="4 antibodies"/>
</dbReference>
<dbReference type="DNASU" id="147111"/>
<dbReference type="Ensembl" id="ENST00000409678.8">
    <property type="protein sequence ID" value="ENSP00000387310.3"/>
    <property type="gene ID" value="ENSG00000185269.12"/>
</dbReference>
<dbReference type="GeneID" id="147111"/>
<dbReference type="KEGG" id="hsa:147111"/>
<dbReference type="MANE-Select" id="ENST00000409678.8">
    <property type="protein sequence ID" value="ENSP00000387310.3"/>
    <property type="RefSeq nucleotide sequence ID" value="NM_178493.6"/>
    <property type="RefSeq protein sequence ID" value="NP_848588.3"/>
</dbReference>
<dbReference type="UCSC" id="uc010wvg.3">
    <property type="organism name" value="human"/>
</dbReference>
<dbReference type="AGR" id="HGNC:27106"/>
<dbReference type="CTD" id="147111"/>
<dbReference type="DisGeNET" id="147111"/>
<dbReference type="GeneCards" id="NOTUM"/>
<dbReference type="HGNC" id="HGNC:27106">
    <property type="gene designation" value="NOTUM"/>
</dbReference>
<dbReference type="HPA" id="ENSG00000185269">
    <property type="expression patterns" value="Tissue enriched (placenta)"/>
</dbReference>
<dbReference type="MIM" id="609847">
    <property type="type" value="gene"/>
</dbReference>
<dbReference type="neXtProt" id="NX_Q6P988"/>
<dbReference type="OpenTargets" id="ENSG00000185269"/>
<dbReference type="PharmGKB" id="PA142671250"/>
<dbReference type="VEuPathDB" id="HostDB:ENSG00000185269"/>
<dbReference type="eggNOG" id="KOG4287">
    <property type="taxonomic scope" value="Eukaryota"/>
</dbReference>
<dbReference type="GeneTree" id="ENSGT00390000015892"/>
<dbReference type="HOGENOM" id="CLU_026533_1_1_1"/>
<dbReference type="InParanoid" id="Q6P988"/>
<dbReference type="OMA" id="SKRDWVN"/>
<dbReference type="OrthoDB" id="2015280at2759"/>
<dbReference type="PAN-GO" id="Q6P988">
    <property type="GO annotations" value="3 GO annotations based on evolutionary models"/>
</dbReference>
<dbReference type="PhylomeDB" id="Q6P988"/>
<dbReference type="TreeFam" id="TF324830"/>
<dbReference type="BRENDA" id="3.1.1.98">
    <property type="organism ID" value="2681"/>
</dbReference>
<dbReference type="PathwayCommons" id="Q6P988"/>
<dbReference type="Reactome" id="R-HSA-381426">
    <property type="pathway name" value="Regulation of Insulin-like Growth Factor (IGF) transport and uptake by Insulin-like Growth Factor Binding Proteins (IGFBPs)"/>
</dbReference>
<dbReference type="Reactome" id="R-HSA-5362798">
    <property type="pathway name" value="Release of Hh-Np from the secreting cell"/>
</dbReference>
<dbReference type="Reactome" id="R-HSA-8957275">
    <property type="pathway name" value="Post-translational protein phosphorylation"/>
</dbReference>
<dbReference type="SignaLink" id="Q6P988"/>
<dbReference type="BioGRID-ORCS" id="147111">
    <property type="hits" value="28 hits in 1151 CRISPR screens"/>
</dbReference>
<dbReference type="EvolutionaryTrace" id="Q6P988"/>
<dbReference type="GenomeRNAi" id="147111"/>
<dbReference type="Pharos" id="Q6P988">
    <property type="development level" value="Tchem"/>
</dbReference>
<dbReference type="PRO" id="PR:Q6P988"/>
<dbReference type="Proteomes" id="UP000005640">
    <property type="component" value="Chromosome 17"/>
</dbReference>
<dbReference type="RNAct" id="Q6P988">
    <property type="molecule type" value="protein"/>
</dbReference>
<dbReference type="Bgee" id="ENSG00000185269">
    <property type="expression patterns" value="Expressed in decidua and 117 other cell types or tissues"/>
</dbReference>
<dbReference type="ExpressionAtlas" id="Q6P988">
    <property type="expression patterns" value="baseline and differential"/>
</dbReference>
<dbReference type="GO" id="GO:0005788">
    <property type="term" value="C:endoplasmic reticulum lumen"/>
    <property type="evidence" value="ECO:0000304"/>
    <property type="project" value="Reactome"/>
</dbReference>
<dbReference type="GO" id="GO:0005576">
    <property type="term" value="C:extracellular region"/>
    <property type="evidence" value="ECO:0000304"/>
    <property type="project" value="Reactome"/>
</dbReference>
<dbReference type="GO" id="GO:1990699">
    <property type="term" value="F:palmitoleyl hydrolase activity"/>
    <property type="evidence" value="ECO:0000314"/>
    <property type="project" value="UniProtKB"/>
</dbReference>
<dbReference type="GO" id="GO:0004629">
    <property type="term" value="F:phospholipase C activity"/>
    <property type="evidence" value="ECO:0000304"/>
    <property type="project" value="Reactome"/>
</dbReference>
<dbReference type="GO" id="GO:0140776">
    <property type="term" value="F:protein-containing complex destabilizing activity"/>
    <property type="evidence" value="ECO:0007669"/>
    <property type="project" value="Ensembl"/>
</dbReference>
<dbReference type="GO" id="GO:0060348">
    <property type="term" value="P:bone development"/>
    <property type="evidence" value="ECO:0000315"/>
    <property type="project" value="MGI"/>
</dbReference>
<dbReference type="GO" id="GO:0090090">
    <property type="term" value="P:negative regulation of canonical Wnt signaling pathway"/>
    <property type="evidence" value="ECO:0000318"/>
    <property type="project" value="GO_Central"/>
</dbReference>
<dbReference type="GO" id="GO:0030178">
    <property type="term" value="P:negative regulation of Wnt signaling pathway"/>
    <property type="evidence" value="ECO:0000314"/>
    <property type="project" value="UniProtKB"/>
</dbReference>
<dbReference type="GO" id="GO:1990697">
    <property type="term" value="P:protein depalmitoleylation"/>
    <property type="evidence" value="ECO:0000314"/>
    <property type="project" value="UniProtKB"/>
</dbReference>
<dbReference type="GO" id="GO:0030500">
    <property type="term" value="P:regulation of bone mineralization"/>
    <property type="evidence" value="ECO:0000314"/>
    <property type="project" value="MGI"/>
</dbReference>
<dbReference type="GO" id="GO:0016055">
    <property type="term" value="P:Wnt signaling pathway"/>
    <property type="evidence" value="ECO:0007669"/>
    <property type="project" value="UniProtKB-KW"/>
</dbReference>
<dbReference type="InterPro" id="IPR004963">
    <property type="entry name" value="PAE/NOTUM"/>
</dbReference>
<dbReference type="PANTHER" id="PTHR21562">
    <property type="entry name" value="NOTUM-RELATED"/>
    <property type="match status" value="1"/>
</dbReference>
<dbReference type="PANTHER" id="PTHR21562:SF7">
    <property type="entry name" value="PALMITOLEOYL-PROTEIN CARBOXYLESTERASE NOTUM"/>
    <property type="match status" value="1"/>
</dbReference>
<dbReference type="Pfam" id="PF03283">
    <property type="entry name" value="PAE"/>
    <property type="match status" value="1"/>
</dbReference>
<reference key="1">
    <citation type="journal article" date="2006" name="Nature">
        <title>DNA sequence of human chromosome 17 and analysis of rearrangement in the human lineage.</title>
        <authorList>
            <person name="Zody M.C."/>
            <person name="Garber M."/>
            <person name="Adams D.J."/>
            <person name="Sharpe T."/>
            <person name="Harrow J."/>
            <person name="Lupski J.R."/>
            <person name="Nicholson C."/>
            <person name="Searle S.M."/>
            <person name="Wilming L."/>
            <person name="Young S.K."/>
            <person name="Abouelleil A."/>
            <person name="Allen N.R."/>
            <person name="Bi W."/>
            <person name="Bloom T."/>
            <person name="Borowsky M.L."/>
            <person name="Bugalter B.E."/>
            <person name="Butler J."/>
            <person name="Chang J.L."/>
            <person name="Chen C.-K."/>
            <person name="Cook A."/>
            <person name="Corum B."/>
            <person name="Cuomo C.A."/>
            <person name="de Jong P.J."/>
            <person name="DeCaprio D."/>
            <person name="Dewar K."/>
            <person name="FitzGerald M."/>
            <person name="Gilbert J."/>
            <person name="Gibson R."/>
            <person name="Gnerre S."/>
            <person name="Goldstein S."/>
            <person name="Grafham D.V."/>
            <person name="Grocock R."/>
            <person name="Hafez N."/>
            <person name="Hagopian D.S."/>
            <person name="Hart E."/>
            <person name="Norman C.H."/>
            <person name="Humphray S."/>
            <person name="Jaffe D.B."/>
            <person name="Jones M."/>
            <person name="Kamal M."/>
            <person name="Khodiyar V.K."/>
            <person name="LaButti K."/>
            <person name="Laird G."/>
            <person name="Lehoczky J."/>
            <person name="Liu X."/>
            <person name="Lokyitsang T."/>
            <person name="Loveland J."/>
            <person name="Lui A."/>
            <person name="Macdonald P."/>
            <person name="Major J.E."/>
            <person name="Matthews L."/>
            <person name="Mauceli E."/>
            <person name="McCarroll S.A."/>
            <person name="Mihalev A.H."/>
            <person name="Mudge J."/>
            <person name="Nguyen C."/>
            <person name="Nicol R."/>
            <person name="O'Leary S.B."/>
            <person name="Osoegawa K."/>
            <person name="Schwartz D.C."/>
            <person name="Shaw-Smith C."/>
            <person name="Stankiewicz P."/>
            <person name="Steward C."/>
            <person name="Swarbreck D."/>
            <person name="Venkataraman V."/>
            <person name="Whittaker C.A."/>
            <person name="Yang X."/>
            <person name="Zimmer A.R."/>
            <person name="Bradley A."/>
            <person name="Hubbard T."/>
            <person name="Birren B.W."/>
            <person name="Rogers J."/>
            <person name="Lander E.S."/>
            <person name="Nusbaum C."/>
        </authorList>
    </citation>
    <scope>NUCLEOTIDE SEQUENCE [LARGE SCALE GENOMIC DNA]</scope>
</reference>
<reference key="2">
    <citation type="journal article" date="2004" name="Genome Res.">
        <title>The status, quality, and expansion of the NIH full-length cDNA project: the Mammalian Gene Collection (MGC).</title>
        <authorList>
            <consortium name="The MGC Project Team"/>
        </authorList>
    </citation>
    <scope>NUCLEOTIDE SEQUENCE [LARGE SCALE MRNA]</scope>
    <source>
        <tissue>Pancreas</tissue>
        <tissue>Placenta</tissue>
    </source>
</reference>
<reference key="3">
    <citation type="submission" date="2001-05" db="EMBL/GenBank/DDBJ databases">
        <title>Identification of immuno-peptidmics that recognized by tumor-reactive CTL generated from TIL of colon cancer patients.</title>
        <authorList>
            <person name="Shichijo S."/>
            <person name="Itoh K."/>
        </authorList>
    </citation>
    <scope>NUCLEOTIDE SEQUENCE [MRNA] OF 102-496</scope>
    <source>
        <tissue>Colon adenocarcinoma</tissue>
    </source>
</reference>
<reference key="4">
    <citation type="journal article" date="2002" name="Dev. Cell">
        <title>HSPG modification by the secreted enzyme Notum shapes the Wingless morphogen gradient.</title>
        <authorList>
            <person name="Giraldez A.J."/>
            <person name="Copley R.R."/>
            <person name="Cohen S.M."/>
        </authorList>
    </citation>
    <scope>IDENTIFICATION</scope>
</reference>
<reference key="5">
    <citation type="journal article" date="2008" name="Cancer Sci.">
        <title>Human homolog of NOTUM, overexpressed in hepatocellular carcinoma, is regulated transcriptionally by beta-catenin/TCF.</title>
        <authorList>
            <person name="Torisu Y."/>
            <person name="Watanabe A."/>
            <person name="Nonaka A."/>
            <person name="Midorikawa Y."/>
            <person name="Makuuchi M."/>
            <person name="Shimamura T."/>
            <person name="Sugimura H."/>
            <person name="Niida A."/>
            <person name="Akiyama T."/>
            <person name="Iwanari H."/>
            <person name="Kodama T."/>
            <person name="Zeniya M."/>
            <person name="Aburatani H."/>
        </authorList>
    </citation>
    <scope>TISSUE SPECIFICITY</scope>
    <scope>INDUCTION</scope>
</reference>
<reference key="6">
    <citation type="journal article" date="2015" name="Cell">
        <title>A single kinase generates the majority of the secreted phosphoproteome.</title>
        <authorList>
            <person name="Tagliabracci V.S."/>
            <person name="Wiley S.E."/>
            <person name="Guo X."/>
            <person name="Kinch L.N."/>
            <person name="Durrant E."/>
            <person name="Wen J."/>
            <person name="Xiao J."/>
            <person name="Cui J."/>
            <person name="Nguyen K.B."/>
            <person name="Engel J.L."/>
            <person name="Coon J.J."/>
            <person name="Grishin N."/>
            <person name="Pinna L.A."/>
            <person name="Pagliarini D.J."/>
            <person name="Dixon J.E."/>
        </authorList>
    </citation>
    <scope>PHOSPHORYLATION AT SER-81</scope>
</reference>
<reference key="7">
    <citation type="journal article" date="2015" name="Nature">
        <title>Notum deacylates Wnt proteins to suppress signalling activity.</title>
        <authorList>
            <person name="Kakugawa S."/>
            <person name="Langton P.F."/>
            <person name="Zebisch M."/>
            <person name="Howell S.A."/>
            <person name="Chang T.H."/>
            <person name="Liu Y."/>
            <person name="Feizi T."/>
            <person name="Bineva G."/>
            <person name="O'Reilly N."/>
            <person name="Snijders A.P."/>
            <person name="Jones E.Y."/>
            <person name="Vincent J.P."/>
        </authorList>
    </citation>
    <scope>X-RAY CRYSTALLOGRAPHY (1.5 ANGSTROMS) OF 38-496 IN COMPLEX WITH O-PALMITOLEOYL SERINE</scope>
    <scope>CATALYTIC ACTIVITY</scope>
    <scope>FUNCTION</scope>
    <scope>ACTIVE SITE</scope>
    <scope>GLYCOSYLATION AT ASN-96</scope>
    <scope>MUTAGENESIS OF SER-232</scope>
</reference>
<feature type="signal peptide" evidence="2">
    <location>
        <begin position="1"/>
        <end position="19"/>
    </location>
</feature>
<feature type="chain" id="PRO_0000318755" description="Palmitoleoyl-protein carboxylesterase NOTUM">
    <location>
        <begin position="20"/>
        <end position="496"/>
    </location>
</feature>
<feature type="region of interest" description="Disordered" evidence="3">
    <location>
        <begin position="21"/>
        <end position="46"/>
    </location>
</feature>
<feature type="active site" description="Charge relay system" evidence="5">
    <location>
        <position position="232"/>
    </location>
</feature>
<feature type="active site" description="Charge relay system" evidence="5">
    <location>
        <position position="340"/>
    </location>
</feature>
<feature type="active site" description="Charge relay system" evidence="5">
    <location>
        <position position="389"/>
    </location>
</feature>
<feature type="modified residue" description="Phosphoserine; by FAM20C" evidence="6">
    <location>
        <position position="81"/>
    </location>
</feature>
<feature type="glycosylation site" description="N-linked (GlcNAc...) asparagine" evidence="11 12 13 14 15 16 17 18 19 20">
    <location>
        <position position="96"/>
    </location>
</feature>
<feature type="mutagenesis site" description="Abolishes enzyme activity. Unable to mediate serine depalmitoleoylation of WNT proteins." evidence="5">
    <original>S</original>
    <variation>A</variation>
    <location>
        <position position="232"/>
    </location>
</feature>
<feature type="sequence conflict" description="In Ref. 2; AAH36872." evidence="9" ref="2">
    <original>I</original>
    <variation>N</variation>
    <location>
        <position position="207"/>
    </location>
</feature>
<feature type="sequence conflict" description="In Ref. 2; AAH36872." evidence="9" ref="2">
    <original>R</original>
    <variation>L</variation>
    <location>
        <position position="244"/>
    </location>
</feature>
<feature type="helix" evidence="22">
    <location>
        <begin position="85"/>
        <end position="87"/>
    </location>
</feature>
<feature type="strand" evidence="28">
    <location>
        <begin position="89"/>
        <end position="93"/>
    </location>
</feature>
<feature type="strand" evidence="24">
    <location>
        <begin position="95"/>
        <end position="98"/>
    </location>
</feature>
<feature type="strand" evidence="27">
    <location>
        <begin position="104"/>
        <end position="106"/>
    </location>
</feature>
<feature type="strand" evidence="28">
    <location>
        <begin position="108"/>
        <end position="112"/>
    </location>
</feature>
<feature type="strand" evidence="28">
    <location>
        <begin position="119"/>
        <end position="124"/>
    </location>
</feature>
<feature type="helix" evidence="28">
    <location>
        <begin position="133"/>
        <end position="142"/>
    </location>
</feature>
<feature type="helix" evidence="28">
    <location>
        <begin position="144"/>
        <end position="146"/>
    </location>
</feature>
<feature type="strand" evidence="28">
    <location>
        <begin position="154"/>
        <end position="156"/>
    </location>
</feature>
<feature type="helix" evidence="28">
    <location>
        <begin position="160"/>
        <end position="162"/>
    </location>
</feature>
<feature type="turn" evidence="28">
    <location>
        <begin position="166"/>
        <end position="168"/>
    </location>
</feature>
<feature type="turn" evidence="28">
    <location>
        <begin position="170"/>
        <end position="174"/>
    </location>
</feature>
<feature type="strand" evidence="28">
    <location>
        <begin position="175"/>
        <end position="180"/>
    </location>
</feature>
<feature type="strand" evidence="28">
    <location>
        <begin position="184"/>
        <end position="186"/>
    </location>
</feature>
<feature type="strand" evidence="29">
    <location>
        <begin position="195"/>
        <end position="197"/>
    </location>
</feature>
<feature type="strand" evidence="26">
    <location>
        <begin position="198"/>
        <end position="200"/>
    </location>
</feature>
<feature type="helix" evidence="28">
    <location>
        <begin position="204"/>
        <end position="216"/>
    </location>
</feature>
<feature type="turn" evidence="28">
    <location>
        <begin position="217"/>
        <end position="219"/>
    </location>
</feature>
<feature type="helix" evidence="28">
    <location>
        <begin position="220"/>
        <end position="222"/>
    </location>
</feature>
<feature type="strand" evidence="28">
    <location>
        <begin position="224"/>
        <end position="231"/>
    </location>
</feature>
<feature type="helix" evidence="28">
    <location>
        <begin position="233"/>
        <end position="252"/>
    </location>
</feature>
<feature type="strand" evidence="28">
    <location>
        <begin position="258"/>
        <end position="265"/>
    </location>
</feature>
<feature type="strand" evidence="26">
    <location>
        <begin position="279"/>
        <end position="281"/>
    </location>
</feature>
<feature type="turn" evidence="26">
    <location>
        <begin position="282"/>
        <end position="284"/>
    </location>
</feature>
<feature type="helix" evidence="28">
    <location>
        <begin position="287"/>
        <end position="298"/>
    </location>
</feature>
<feature type="helix" evidence="28">
    <location>
        <begin position="304"/>
        <end position="310"/>
    </location>
</feature>
<feature type="helix" evidence="28">
    <location>
        <begin position="315"/>
        <end position="319"/>
    </location>
</feature>
<feature type="helix" evidence="28">
    <location>
        <begin position="321"/>
        <end position="324"/>
    </location>
</feature>
<feature type="helix" evidence="28">
    <location>
        <begin position="325"/>
        <end position="327"/>
    </location>
</feature>
<feature type="strand" evidence="28">
    <location>
        <begin position="332"/>
        <end position="335"/>
    </location>
</feature>
<feature type="strand" evidence="23">
    <location>
        <begin position="338"/>
        <end position="340"/>
    </location>
</feature>
<feature type="helix" evidence="28">
    <location>
        <begin position="341"/>
        <end position="346"/>
    </location>
</feature>
<feature type="strand" evidence="25">
    <location>
        <begin position="352"/>
        <end position="354"/>
    </location>
</feature>
<feature type="helix" evidence="28">
    <location>
        <begin position="358"/>
        <end position="374"/>
    </location>
</feature>
<feature type="turn" evidence="28">
    <location>
        <begin position="375"/>
        <end position="377"/>
    </location>
</feature>
<feature type="strand" evidence="28">
    <location>
        <begin position="379"/>
        <end position="383"/>
    </location>
</feature>
<feature type="strand" evidence="23">
    <location>
        <begin position="385"/>
        <end position="388"/>
    </location>
</feature>
<feature type="turn" evidence="28">
    <location>
        <begin position="395"/>
        <end position="398"/>
    </location>
</feature>
<feature type="helix" evidence="28">
    <location>
        <begin position="407"/>
        <end position="417"/>
    </location>
</feature>
<feature type="turn" evidence="21">
    <location>
        <begin position="428"/>
        <end position="431"/>
    </location>
</feature>
<feature type="strand" evidence="28">
    <location>
        <begin position="435"/>
        <end position="437"/>
    </location>
</feature>
<feature type="strand" evidence="23">
    <location>
        <begin position="441"/>
        <end position="444"/>
    </location>
</feature>
<keyword id="KW-0002">3D-structure</keyword>
<keyword id="KW-0325">Glycoprotein</keyword>
<keyword id="KW-0378">Hydrolase</keyword>
<keyword id="KW-0597">Phosphoprotein</keyword>
<keyword id="KW-1267">Proteomics identification</keyword>
<keyword id="KW-1185">Reference proteome</keyword>
<keyword id="KW-0964">Secreted</keyword>
<keyword id="KW-0719">Serine esterase</keyword>
<keyword id="KW-0732">Signal</keyword>
<keyword id="KW-0879">Wnt signaling pathway</keyword>
<proteinExistence type="evidence at protein level"/>
<evidence type="ECO:0000250" key="1">
    <source>
        <dbReference type="UniProtKB" id="Q9VUX3"/>
    </source>
</evidence>
<evidence type="ECO:0000255" key="2"/>
<evidence type="ECO:0000256" key="3">
    <source>
        <dbReference type="SAM" id="MobiDB-lite"/>
    </source>
</evidence>
<evidence type="ECO:0000269" key="4">
    <source>
    </source>
</evidence>
<evidence type="ECO:0000269" key="5">
    <source>
    </source>
</evidence>
<evidence type="ECO:0000269" key="6">
    <source>
    </source>
</evidence>
<evidence type="ECO:0000303" key="7">
    <source>
    </source>
</evidence>
<evidence type="ECO:0000303" key="8">
    <source ref="3"/>
</evidence>
<evidence type="ECO:0000305" key="9"/>
<evidence type="ECO:0000312" key="10">
    <source>
        <dbReference type="HGNC" id="HGNC:27106"/>
    </source>
</evidence>
<evidence type="ECO:0007744" key="11">
    <source>
        <dbReference type="PDB" id="4UYU"/>
    </source>
</evidence>
<evidence type="ECO:0007744" key="12">
    <source>
        <dbReference type="PDB" id="4UYW"/>
    </source>
</evidence>
<evidence type="ECO:0007744" key="13">
    <source>
        <dbReference type="PDB" id="4UYZ"/>
    </source>
</evidence>
<evidence type="ECO:0007744" key="14">
    <source>
        <dbReference type="PDB" id="4UZ1"/>
    </source>
</evidence>
<evidence type="ECO:0007744" key="15">
    <source>
        <dbReference type="PDB" id="4UZ5"/>
    </source>
</evidence>
<evidence type="ECO:0007744" key="16">
    <source>
        <dbReference type="PDB" id="4UZ6"/>
    </source>
</evidence>
<evidence type="ECO:0007744" key="17">
    <source>
        <dbReference type="PDB" id="4UZ9"/>
    </source>
</evidence>
<evidence type="ECO:0007744" key="18">
    <source>
        <dbReference type="PDB" id="4UZA"/>
    </source>
</evidence>
<evidence type="ECO:0007744" key="19">
    <source>
        <dbReference type="PDB" id="4UZL"/>
    </source>
</evidence>
<evidence type="ECO:0007744" key="20">
    <source>
        <dbReference type="PDB" id="4UZQ"/>
    </source>
</evidence>
<evidence type="ECO:0007829" key="21">
    <source>
        <dbReference type="PDB" id="4UZ7"/>
    </source>
</evidence>
<evidence type="ECO:0007829" key="22">
    <source>
        <dbReference type="PDB" id="4UZA"/>
    </source>
</evidence>
<evidence type="ECO:0007829" key="23">
    <source>
        <dbReference type="PDB" id="4UZL"/>
    </source>
</evidence>
<evidence type="ECO:0007829" key="24">
    <source>
        <dbReference type="PDB" id="4WBH"/>
    </source>
</evidence>
<evidence type="ECO:0007829" key="25">
    <source>
        <dbReference type="PDB" id="6YV0"/>
    </source>
</evidence>
<evidence type="ECO:0007829" key="26">
    <source>
        <dbReference type="PDB" id="7BLS"/>
    </source>
</evidence>
<evidence type="ECO:0007829" key="27">
    <source>
        <dbReference type="PDB" id="7BLU"/>
    </source>
</evidence>
<evidence type="ECO:0007829" key="28">
    <source>
        <dbReference type="PDB" id="7BNB"/>
    </source>
</evidence>
<evidence type="ECO:0007829" key="29">
    <source>
        <dbReference type="PDB" id="7BNE"/>
    </source>
</evidence>
<comment type="function">
    <text evidence="5">Carboxylesterase that acts as a key negative regulator of the Wnt signaling pathway by specifically mediating depalmitoleoylation of WNT proteins. Serine palmitoleoylation of WNT proteins is required for efficient binding to frizzled receptors (PubMed:25731175).</text>
</comment>
<comment type="catalytic activity">
    <reaction evidence="5">
        <text>[Wnt protein]-O-(9Z)-hexadecenoyl-L-serine + H2O = [Wnt protein]-L-serine + (9Z)-hexadecenoate + H(+)</text>
        <dbReference type="Rhea" id="RHEA:45340"/>
        <dbReference type="Rhea" id="RHEA-COMP:11170"/>
        <dbReference type="Rhea" id="RHEA-COMP:11171"/>
        <dbReference type="ChEBI" id="CHEBI:15377"/>
        <dbReference type="ChEBI" id="CHEBI:15378"/>
        <dbReference type="ChEBI" id="CHEBI:29999"/>
        <dbReference type="ChEBI" id="CHEBI:32372"/>
        <dbReference type="ChEBI" id="CHEBI:85189"/>
        <dbReference type="EC" id="3.1.1.98"/>
    </reaction>
</comment>
<comment type="interaction">
    <interactant intactId="EBI-16147014">
        <id>Q6P988</id>
    </interactant>
    <interactant intactId="EBI-625509">
        <id>Q8N720</id>
        <label>ZNF655</label>
    </interactant>
    <organismsDiffer>false</organismsDiffer>
    <experiments>3</experiments>
</comment>
<comment type="subcellular location">
    <subcellularLocation>
        <location evidence="1">Secreted</location>
    </subcellularLocation>
</comment>
<comment type="tissue specificity">
    <text evidence="4">Rarely expressed in adult normal tissues.</text>
</comment>
<comment type="induction">
    <text evidence="4">Up-regulated in hepatocellular carcinoma (HCC) with high intracellular beta-catenin.</text>
</comment>
<comment type="similarity">
    <text evidence="9">Belongs to the pectinacetylesterase family. Notum subfamily.</text>
</comment>
<comment type="caution">
    <text evidence="5">The molecular function of NOTUM has remained unclear for many years. It was initially thought to hydrolyze glycosaminoglycan (GAG) chains of glypicans, thereby affecting glypicans ability to interact with Wnt ligands. It was later reported to trigger glypican shedding, by mediating cleavage of their GPI-anchor. However, while NOTUM specifically inhibit the Wnt signaling pathway, more pleiotropic effects would be expected from an enzyme affecting glypicans. It was finally shown that it requires glypicans to suppress Wnt signaling, but does not cleave their GPI-anchor. It acts by mediating depalmitoleoylation of WNT proteins, impairing WNT binding to frizzled receptors (PubMed:25731175).</text>
</comment>
<comment type="sequence caution" evidence="9">
    <conflict type="erroneous initiation">
        <sequence resource="EMBL-CDS" id="AAH36872"/>
    </conflict>
    <text>Truncated N-terminus.</text>
</comment>
<comment type="sequence caution" evidence="9">
    <conflict type="erroneous initiation">
        <sequence resource="EMBL-CDS" id="AAH60882"/>
    </conflict>
    <text>Truncated N-terminus.</text>
</comment>
<comment type="sequence caution" evidence="9">
    <conflict type="erroneous initiation">
        <sequence resource="EMBL-CDS" id="BAB93501"/>
    </conflict>
    <text>Truncated N-terminus.</text>
</comment>
<comment type="online information" name="Protein Spotlight">
    <link uri="https://www.proteinspotlight.org/back_issues/177/"/>
    <text>The art of biocuration - Issue 177 of March 2016</text>
</comment>
<organism>
    <name type="scientific">Homo sapiens</name>
    <name type="common">Human</name>
    <dbReference type="NCBI Taxonomy" id="9606"/>
    <lineage>
        <taxon>Eukaryota</taxon>
        <taxon>Metazoa</taxon>
        <taxon>Chordata</taxon>
        <taxon>Craniata</taxon>
        <taxon>Vertebrata</taxon>
        <taxon>Euteleostomi</taxon>
        <taxon>Mammalia</taxon>
        <taxon>Eutheria</taxon>
        <taxon>Euarchontoglires</taxon>
        <taxon>Primates</taxon>
        <taxon>Haplorrhini</taxon>
        <taxon>Catarrhini</taxon>
        <taxon>Hominidae</taxon>
        <taxon>Homo</taxon>
    </lineage>
</organism>
<protein>
    <recommendedName>
        <fullName evidence="9">Palmitoleoyl-protein carboxylesterase NOTUM</fullName>
        <ecNumber evidence="5">3.1.1.98</ecNumber>
    </recommendedName>
    <alternativeName>
        <fullName evidence="7">hNOTUM</fullName>
    </alternativeName>
</protein>
<gene>
    <name evidence="10" type="primary">NOTUM</name>
    <name evidence="8" type="ORF">OK/SW-CL.30</name>
</gene>
<sequence length="496" mass="55699">MGRGVRVLLLLSLLHCAGGSEGRKTWRRRGQQPPPPPRTEAAPAAGQPVESFPLDFTAVEGNMDSFMAQVKSLAQSLYPCSAQQLNEDLRLHLLLNTSVTCNDGSPAGYYLKESRGSRRWLLFLEGGWYCFNRENCDSRYDTMRRLMSSRDWPRTRTGTGILSSQPEENPYWWNANMVFIPYCSSDVWSGASSKSEKNEYAFMGALIIQEVVRELLGRGLSGAKVLLLAGSSAGGTGVLLNVDRVAEQLEKLGYPAIQVRGLADSGWFLDNKQYRHTDCVDTITCAPTEAIRRGIRYWNGVVPERCRRQFQEGEEWNCFFGYKVYPTLRCPVFVVQWLFDEAQLTVDNVHLTGQPVQEGLRLYIQNLGRELRHTLKDVPASFAPACLSHEIIIRSHWTDVQVKGTSLPRALHCWDRSLHDSHKASKTPLKGCPVHLVDSCPWPHCNPSCPTVRDQFTGQEMNVAQFLMHMGFDMQTVAQPQGLEPSELLGMLSNGS</sequence>